<reference key="1">
    <citation type="journal article" date="2012" name="BMC Microbiol.">
        <title>Genome sequence of Desulfitobacterium hafniense DCB-2, a Gram-positive anaerobe capable of dehalogenation and metal reduction.</title>
        <authorList>
            <person name="Kim S.H."/>
            <person name="Harzman C."/>
            <person name="Davis J.K."/>
            <person name="Hutcheson R."/>
            <person name="Broderick J.B."/>
            <person name="Marsh T.L."/>
            <person name="Tiedje J.M."/>
        </authorList>
    </citation>
    <scope>NUCLEOTIDE SEQUENCE [LARGE SCALE GENOMIC DNA]</scope>
    <source>
        <strain>DSM 10664 / DCB-2</strain>
    </source>
</reference>
<feature type="chain" id="PRO_1000135526" description="Glucose-6-phosphate isomerase">
    <location>
        <begin position="1"/>
        <end position="533"/>
    </location>
</feature>
<feature type="active site" description="Proton donor" evidence="1">
    <location>
        <position position="322"/>
    </location>
</feature>
<feature type="active site" evidence="1">
    <location>
        <position position="351"/>
    </location>
</feature>
<feature type="active site" evidence="1">
    <location>
        <position position="455"/>
    </location>
</feature>
<gene>
    <name evidence="1" type="primary">pgi</name>
    <name type="ordered locus">Dhaf_3194</name>
</gene>
<protein>
    <recommendedName>
        <fullName evidence="1">Glucose-6-phosphate isomerase</fullName>
        <shortName evidence="1">GPI</shortName>
        <ecNumber evidence="1">5.3.1.9</ecNumber>
    </recommendedName>
    <alternativeName>
        <fullName evidence="1">Phosphoglucose isomerase</fullName>
        <shortName evidence="1">PGI</shortName>
    </alternativeName>
    <alternativeName>
        <fullName evidence="1">Phosphohexose isomerase</fullName>
        <shortName evidence="1">PHI</shortName>
    </alternativeName>
</protein>
<name>G6PI_DESHD</name>
<sequence>MVIITSWKRFKEYLYYDQELELLLDISRMNFSAEFLTELAEPMRDAYHQLQLLEKGALANPDEGRMVGHYWLRNPDLAPTEEIAQDIKETLKEILDFAEQIHSGRLQGEKGNPFRNILLVGVGGSILGPRFVADALASSRDKMKAFFIDNGDPDGIDRVLSRIGEELPATLCLIISKSGGTIETRNGMLEVRRAYEEAGLSFPDHAVAITQRGSQLDKLSQKEGWLRAFPMWDWVGGRTSLLSAVGLLSLALQGIDVAGLLQGAKDCDGRTRRPDTLANPGALLALMWYYSTQGQGGKQMVVLPYKDRLELFTKYLQQLIMESLGKEKNLQGETVHQGITVYGNKGSSDQHSYLQQLLEGPDNFFVTFIEVLKDRQGSSAYMEENSTSGEYLQAFLLGTREALTQKGRESLTITVKEVNAYTIGVLIALFERAVSIYALLVGINAYHQPAVEMGKKAAGQAIQLKNNIVECLKKHPDKRFSVHEIALAIGEEAHQEMVFKLLLHLTTNPEHGVNMAAGHPLPESRFFVSGPIL</sequence>
<keyword id="KW-0963">Cytoplasm</keyword>
<keyword id="KW-0312">Gluconeogenesis</keyword>
<keyword id="KW-0324">Glycolysis</keyword>
<keyword id="KW-0413">Isomerase</keyword>
<evidence type="ECO:0000255" key="1">
    <source>
        <dbReference type="HAMAP-Rule" id="MF_00473"/>
    </source>
</evidence>
<dbReference type="EC" id="5.3.1.9" evidence="1"/>
<dbReference type="EMBL" id="CP001336">
    <property type="protein sequence ID" value="ACL21214.1"/>
    <property type="molecule type" value="Genomic_DNA"/>
</dbReference>
<dbReference type="RefSeq" id="WP_015944462.1">
    <property type="nucleotide sequence ID" value="NC_011830.1"/>
</dbReference>
<dbReference type="SMR" id="B8G1G1"/>
<dbReference type="KEGG" id="dhd:Dhaf_3194"/>
<dbReference type="HOGENOM" id="CLU_033288_0_0_9"/>
<dbReference type="UniPathway" id="UPA00109">
    <property type="reaction ID" value="UER00181"/>
</dbReference>
<dbReference type="UniPathway" id="UPA00138"/>
<dbReference type="Proteomes" id="UP000007726">
    <property type="component" value="Chromosome"/>
</dbReference>
<dbReference type="GO" id="GO:0005829">
    <property type="term" value="C:cytosol"/>
    <property type="evidence" value="ECO:0007669"/>
    <property type="project" value="TreeGrafter"/>
</dbReference>
<dbReference type="GO" id="GO:0097367">
    <property type="term" value="F:carbohydrate derivative binding"/>
    <property type="evidence" value="ECO:0007669"/>
    <property type="project" value="InterPro"/>
</dbReference>
<dbReference type="GO" id="GO:0004347">
    <property type="term" value="F:glucose-6-phosphate isomerase activity"/>
    <property type="evidence" value="ECO:0007669"/>
    <property type="project" value="UniProtKB-UniRule"/>
</dbReference>
<dbReference type="GO" id="GO:0048029">
    <property type="term" value="F:monosaccharide binding"/>
    <property type="evidence" value="ECO:0007669"/>
    <property type="project" value="TreeGrafter"/>
</dbReference>
<dbReference type="GO" id="GO:0006094">
    <property type="term" value="P:gluconeogenesis"/>
    <property type="evidence" value="ECO:0007669"/>
    <property type="project" value="UniProtKB-UniRule"/>
</dbReference>
<dbReference type="GO" id="GO:0051156">
    <property type="term" value="P:glucose 6-phosphate metabolic process"/>
    <property type="evidence" value="ECO:0007669"/>
    <property type="project" value="TreeGrafter"/>
</dbReference>
<dbReference type="GO" id="GO:0006096">
    <property type="term" value="P:glycolytic process"/>
    <property type="evidence" value="ECO:0007669"/>
    <property type="project" value="UniProtKB-UniRule"/>
</dbReference>
<dbReference type="CDD" id="cd05015">
    <property type="entry name" value="SIS_PGI_1"/>
    <property type="match status" value="1"/>
</dbReference>
<dbReference type="CDD" id="cd05016">
    <property type="entry name" value="SIS_PGI_2"/>
    <property type="match status" value="1"/>
</dbReference>
<dbReference type="FunFam" id="3.40.50.10490:FF:000021">
    <property type="entry name" value="Glucose-6-phosphate isomerase"/>
    <property type="match status" value="1"/>
</dbReference>
<dbReference type="FunFam" id="3.40.50.10490:FF:000023">
    <property type="entry name" value="Glucose-6-phosphate isomerase"/>
    <property type="match status" value="1"/>
</dbReference>
<dbReference type="Gene3D" id="3.40.50.10490">
    <property type="entry name" value="Glucose-6-phosphate isomerase like protein, domain 1"/>
    <property type="match status" value="2"/>
</dbReference>
<dbReference type="HAMAP" id="MF_00473">
    <property type="entry name" value="G6P_isomerase"/>
    <property type="match status" value="1"/>
</dbReference>
<dbReference type="InterPro" id="IPR001672">
    <property type="entry name" value="G6P_Isomerase"/>
</dbReference>
<dbReference type="InterPro" id="IPR018189">
    <property type="entry name" value="Phosphoglucose_isomerase_CS"/>
</dbReference>
<dbReference type="InterPro" id="IPR046348">
    <property type="entry name" value="SIS_dom_sf"/>
</dbReference>
<dbReference type="InterPro" id="IPR035476">
    <property type="entry name" value="SIS_PGI_1"/>
</dbReference>
<dbReference type="InterPro" id="IPR035482">
    <property type="entry name" value="SIS_PGI_2"/>
</dbReference>
<dbReference type="NCBIfam" id="NF010696">
    <property type="entry name" value="PRK14096.1"/>
    <property type="match status" value="1"/>
</dbReference>
<dbReference type="PANTHER" id="PTHR11469">
    <property type="entry name" value="GLUCOSE-6-PHOSPHATE ISOMERASE"/>
    <property type="match status" value="1"/>
</dbReference>
<dbReference type="PANTHER" id="PTHR11469:SF1">
    <property type="entry name" value="GLUCOSE-6-PHOSPHATE ISOMERASE"/>
    <property type="match status" value="1"/>
</dbReference>
<dbReference type="Pfam" id="PF00342">
    <property type="entry name" value="PGI"/>
    <property type="match status" value="1"/>
</dbReference>
<dbReference type="PRINTS" id="PR00662">
    <property type="entry name" value="G6PISOMERASE"/>
</dbReference>
<dbReference type="SUPFAM" id="SSF53697">
    <property type="entry name" value="SIS domain"/>
    <property type="match status" value="1"/>
</dbReference>
<dbReference type="PROSITE" id="PS00174">
    <property type="entry name" value="P_GLUCOSE_ISOMERASE_2"/>
    <property type="match status" value="1"/>
</dbReference>
<dbReference type="PROSITE" id="PS51463">
    <property type="entry name" value="P_GLUCOSE_ISOMERASE_3"/>
    <property type="match status" value="1"/>
</dbReference>
<organism>
    <name type="scientific">Desulfitobacterium hafniense (strain DSM 10664 / DCB-2)</name>
    <dbReference type="NCBI Taxonomy" id="272564"/>
    <lineage>
        <taxon>Bacteria</taxon>
        <taxon>Bacillati</taxon>
        <taxon>Bacillota</taxon>
        <taxon>Clostridia</taxon>
        <taxon>Eubacteriales</taxon>
        <taxon>Desulfitobacteriaceae</taxon>
        <taxon>Desulfitobacterium</taxon>
    </lineage>
</organism>
<proteinExistence type="inferred from homology"/>
<comment type="function">
    <text evidence="1">Catalyzes the reversible isomerization of glucose-6-phosphate to fructose-6-phosphate.</text>
</comment>
<comment type="catalytic activity">
    <reaction evidence="1">
        <text>alpha-D-glucose 6-phosphate = beta-D-fructose 6-phosphate</text>
        <dbReference type="Rhea" id="RHEA:11816"/>
        <dbReference type="ChEBI" id="CHEBI:57634"/>
        <dbReference type="ChEBI" id="CHEBI:58225"/>
        <dbReference type="EC" id="5.3.1.9"/>
    </reaction>
</comment>
<comment type="pathway">
    <text evidence="1">Carbohydrate biosynthesis; gluconeogenesis.</text>
</comment>
<comment type="pathway">
    <text evidence="1">Carbohydrate degradation; glycolysis; D-glyceraldehyde 3-phosphate and glycerone phosphate from D-glucose: step 2/4.</text>
</comment>
<comment type="subcellular location">
    <subcellularLocation>
        <location evidence="1">Cytoplasm</location>
    </subcellularLocation>
</comment>
<comment type="similarity">
    <text evidence="1">Belongs to the GPI family.</text>
</comment>
<accession>B8G1G1</accession>